<evidence type="ECO:0000255" key="1"/>
<evidence type="ECO:0000255" key="2">
    <source>
        <dbReference type="PROSITE-ProRule" id="PRU00274"/>
    </source>
</evidence>
<evidence type="ECO:0000256" key="3">
    <source>
        <dbReference type="SAM" id="MobiDB-lite"/>
    </source>
</evidence>
<evidence type="ECO:0000305" key="4"/>
<protein>
    <recommendedName>
        <fullName evidence="4">Putative serine protease 47</fullName>
        <ecNumber evidence="4">3.4.21.-</ecNumber>
    </recommendedName>
    <alternativeName>
        <fullName evidence="4">Serine protease 47, pseudogene</fullName>
    </alternativeName>
</protein>
<proteinExistence type="uncertain"/>
<feature type="signal peptide" evidence="1">
    <location>
        <begin position="1"/>
        <end position="23"/>
    </location>
</feature>
<feature type="chain" id="PRO_0000343890" description="Putative serine protease 47">
    <location>
        <begin position="24"/>
        <end position="375"/>
    </location>
</feature>
<feature type="domain" description="Peptidase S1" evidence="2">
    <location>
        <begin position="81"/>
        <end position="323"/>
    </location>
</feature>
<feature type="region of interest" description="Disordered" evidence="3">
    <location>
        <begin position="41"/>
        <end position="60"/>
    </location>
</feature>
<feature type="compositionally biased region" description="Polar residues" evidence="3">
    <location>
        <begin position="51"/>
        <end position="60"/>
    </location>
</feature>
<feature type="active site" description="Charge relay system" evidence="2">
    <location>
        <position position="121"/>
    </location>
</feature>
<feature type="active site" description="Charge relay system" evidence="2">
    <location>
        <position position="172"/>
    </location>
</feature>
<feature type="active site" description="Charge relay system" evidence="2">
    <location>
        <position position="275"/>
    </location>
</feature>
<feature type="glycosylation site" description="N-linked (GlcNAc...) asparagine" evidence="1">
    <location>
        <position position="183"/>
    </location>
</feature>
<feature type="glycosylation site" description="N-linked (GlcNAc...) asparagine" evidence="1">
    <location>
        <position position="203"/>
    </location>
</feature>
<feature type="disulfide bond" evidence="2">
    <location>
        <begin position="106"/>
        <end position="122"/>
    </location>
</feature>
<feature type="disulfide bond" evidence="2">
    <location>
        <begin position="206"/>
        <end position="281"/>
    </location>
</feature>
<dbReference type="EC" id="3.4.21.-" evidence="4"/>
<dbReference type="EMBL" id="AL136097">
    <property type="status" value="NOT_ANNOTATED_CDS"/>
    <property type="molecule type" value="Genomic_DNA"/>
</dbReference>
<dbReference type="SMR" id="A8MTI9"/>
<dbReference type="FunCoup" id="A8MTI9">
    <property type="interactions" value="253"/>
</dbReference>
<dbReference type="GlyCosmos" id="A8MTI9">
    <property type="glycosylation" value="2 sites, No reported glycans"/>
</dbReference>
<dbReference type="GlyGen" id="A8MTI9">
    <property type="glycosylation" value="2 sites"/>
</dbReference>
<dbReference type="iPTMnet" id="A8MTI9"/>
<dbReference type="PhosphoSitePlus" id="A8MTI9"/>
<dbReference type="BioMuta" id="HGNC:37326"/>
<dbReference type="PeptideAtlas" id="A8MTI9"/>
<dbReference type="ProteomicsDB" id="2026"/>
<dbReference type="TopDownProteomics" id="A8MTI9"/>
<dbReference type="AGR" id="HGNC:37326"/>
<dbReference type="GeneCards" id="PRSS47P"/>
<dbReference type="HGNC" id="HGNC:37326">
    <property type="gene designation" value="PRSS47P"/>
</dbReference>
<dbReference type="neXtProt" id="NX_A8MTI9"/>
<dbReference type="InParanoid" id="A8MTI9"/>
<dbReference type="PAN-GO" id="A8MTI9">
    <property type="GO annotations" value="3 GO annotations based on evolutionary models"/>
</dbReference>
<dbReference type="PhylomeDB" id="A8MTI9"/>
<dbReference type="Pharos" id="A8MTI9">
    <property type="development level" value="Tdark"/>
</dbReference>
<dbReference type="Proteomes" id="UP000005640">
    <property type="component" value="Unplaced"/>
</dbReference>
<dbReference type="RNAct" id="A8MTI9">
    <property type="molecule type" value="protein"/>
</dbReference>
<dbReference type="GO" id="GO:0005615">
    <property type="term" value="C:extracellular space"/>
    <property type="evidence" value="ECO:0000318"/>
    <property type="project" value="GO_Central"/>
</dbReference>
<dbReference type="GO" id="GO:0004252">
    <property type="term" value="F:serine-type endopeptidase activity"/>
    <property type="evidence" value="ECO:0000318"/>
    <property type="project" value="GO_Central"/>
</dbReference>
<dbReference type="GO" id="GO:0006508">
    <property type="term" value="P:proteolysis"/>
    <property type="evidence" value="ECO:0000318"/>
    <property type="project" value="GO_Central"/>
</dbReference>
<dbReference type="CDD" id="cd00190">
    <property type="entry name" value="Tryp_SPc"/>
    <property type="match status" value="1"/>
</dbReference>
<dbReference type="FunFam" id="2.40.10.10:FF:000039">
    <property type="entry name" value="Brain-specific serine protease 4"/>
    <property type="match status" value="1"/>
</dbReference>
<dbReference type="Gene3D" id="1.10.8.270">
    <property type="entry name" value="putative rabgap domain of human tbc1 domain family member 14 like domains"/>
    <property type="match status" value="1"/>
</dbReference>
<dbReference type="Gene3D" id="2.40.10.10">
    <property type="entry name" value="Trypsin-like serine proteases"/>
    <property type="match status" value="1"/>
</dbReference>
<dbReference type="InterPro" id="IPR009003">
    <property type="entry name" value="Peptidase_S1_PA"/>
</dbReference>
<dbReference type="InterPro" id="IPR043504">
    <property type="entry name" value="Peptidase_S1_PA_chymotrypsin"/>
</dbReference>
<dbReference type="InterPro" id="IPR001314">
    <property type="entry name" value="Peptidase_S1A"/>
</dbReference>
<dbReference type="InterPro" id="IPR001254">
    <property type="entry name" value="Trypsin_dom"/>
</dbReference>
<dbReference type="PANTHER" id="PTHR24253:SF42">
    <property type="entry name" value="PROTEASE, SERINE 47"/>
    <property type="match status" value="1"/>
</dbReference>
<dbReference type="PANTHER" id="PTHR24253">
    <property type="entry name" value="TRANSMEMBRANE PROTEASE SERINE"/>
    <property type="match status" value="1"/>
</dbReference>
<dbReference type="Pfam" id="PF00089">
    <property type="entry name" value="Trypsin"/>
    <property type="match status" value="1"/>
</dbReference>
<dbReference type="PRINTS" id="PR00722">
    <property type="entry name" value="CHYMOTRYPSIN"/>
</dbReference>
<dbReference type="SMART" id="SM00020">
    <property type="entry name" value="Tryp_SPc"/>
    <property type="match status" value="1"/>
</dbReference>
<dbReference type="SUPFAM" id="SSF50494">
    <property type="entry name" value="Trypsin-like serine proteases"/>
    <property type="match status" value="1"/>
</dbReference>
<dbReference type="PROSITE" id="PS50240">
    <property type="entry name" value="TRYPSIN_DOM"/>
    <property type="match status" value="1"/>
</dbReference>
<name>PRS47_HUMAN</name>
<organism>
    <name type="scientific">Homo sapiens</name>
    <name type="common">Human</name>
    <dbReference type="NCBI Taxonomy" id="9606"/>
    <lineage>
        <taxon>Eukaryota</taxon>
        <taxon>Metazoa</taxon>
        <taxon>Chordata</taxon>
        <taxon>Craniata</taxon>
        <taxon>Vertebrata</taxon>
        <taxon>Euteleostomi</taxon>
        <taxon>Mammalia</taxon>
        <taxon>Eutheria</taxon>
        <taxon>Euarchontoglires</taxon>
        <taxon>Primates</taxon>
        <taxon>Haplorrhini</taxon>
        <taxon>Catarrhini</taxon>
        <taxon>Hominidae</taxon>
        <taxon>Homo</taxon>
    </lineage>
</organism>
<reference key="1">
    <citation type="journal article" date="2004" name="Nature">
        <title>DNA sequence and analysis of human chromosome 9.</title>
        <authorList>
            <person name="Humphray S.J."/>
            <person name="Oliver K."/>
            <person name="Hunt A.R."/>
            <person name="Plumb R.W."/>
            <person name="Loveland J.E."/>
            <person name="Howe K.L."/>
            <person name="Andrews T.D."/>
            <person name="Searle S."/>
            <person name="Hunt S.E."/>
            <person name="Scott C.E."/>
            <person name="Jones M.C."/>
            <person name="Ainscough R."/>
            <person name="Almeida J.P."/>
            <person name="Ambrose K.D."/>
            <person name="Ashwell R.I.S."/>
            <person name="Babbage A.K."/>
            <person name="Babbage S."/>
            <person name="Bagguley C.L."/>
            <person name="Bailey J."/>
            <person name="Banerjee R."/>
            <person name="Barker D.J."/>
            <person name="Barlow K.F."/>
            <person name="Bates K."/>
            <person name="Beasley H."/>
            <person name="Beasley O."/>
            <person name="Bird C.P."/>
            <person name="Bray-Allen S."/>
            <person name="Brown A.J."/>
            <person name="Brown J.Y."/>
            <person name="Burford D."/>
            <person name="Burrill W."/>
            <person name="Burton J."/>
            <person name="Carder C."/>
            <person name="Carter N.P."/>
            <person name="Chapman J.C."/>
            <person name="Chen Y."/>
            <person name="Clarke G."/>
            <person name="Clark S.Y."/>
            <person name="Clee C.M."/>
            <person name="Clegg S."/>
            <person name="Collier R.E."/>
            <person name="Corby N."/>
            <person name="Crosier M."/>
            <person name="Cummings A.T."/>
            <person name="Davies J."/>
            <person name="Dhami P."/>
            <person name="Dunn M."/>
            <person name="Dutta I."/>
            <person name="Dyer L.W."/>
            <person name="Earthrowl M.E."/>
            <person name="Faulkner L."/>
            <person name="Fleming C.J."/>
            <person name="Frankish A."/>
            <person name="Frankland J.A."/>
            <person name="French L."/>
            <person name="Fricker D.G."/>
            <person name="Garner P."/>
            <person name="Garnett J."/>
            <person name="Ghori J."/>
            <person name="Gilbert J.G.R."/>
            <person name="Glison C."/>
            <person name="Grafham D.V."/>
            <person name="Gribble S."/>
            <person name="Griffiths C."/>
            <person name="Griffiths-Jones S."/>
            <person name="Grocock R."/>
            <person name="Guy J."/>
            <person name="Hall R.E."/>
            <person name="Hammond S."/>
            <person name="Harley J.L."/>
            <person name="Harrison E.S.I."/>
            <person name="Hart E.A."/>
            <person name="Heath P.D."/>
            <person name="Henderson C.D."/>
            <person name="Hopkins B.L."/>
            <person name="Howard P.J."/>
            <person name="Howden P.J."/>
            <person name="Huckle E."/>
            <person name="Johnson C."/>
            <person name="Johnson D."/>
            <person name="Joy A.A."/>
            <person name="Kay M."/>
            <person name="Keenan S."/>
            <person name="Kershaw J.K."/>
            <person name="Kimberley A.M."/>
            <person name="King A."/>
            <person name="Knights A."/>
            <person name="Laird G.K."/>
            <person name="Langford C."/>
            <person name="Lawlor S."/>
            <person name="Leongamornlert D.A."/>
            <person name="Leversha M."/>
            <person name="Lloyd C."/>
            <person name="Lloyd D.M."/>
            <person name="Lovell J."/>
            <person name="Martin S."/>
            <person name="Mashreghi-Mohammadi M."/>
            <person name="Matthews L."/>
            <person name="McLaren S."/>
            <person name="McLay K.E."/>
            <person name="McMurray A."/>
            <person name="Milne S."/>
            <person name="Nickerson T."/>
            <person name="Nisbett J."/>
            <person name="Nordsiek G."/>
            <person name="Pearce A.V."/>
            <person name="Peck A.I."/>
            <person name="Porter K.M."/>
            <person name="Pandian R."/>
            <person name="Pelan S."/>
            <person name="Phillimore B."/>
            <person name="Povey S."/>
            <person name="Ramsey Y."/>
            <person name="Rand V."/>
            <person name="Scharfe M."/>
            <person name="Sehra H.K."/>
            <person name="Shownkeen R."/>
            <person name="Sims S.K."/>
            <person name="Skuce C.D."/>
            <person name="Smith M."/>
            <person name="Steward C.A."/>
            <person name="Swarbreck D."/>
            <person name="Sycamore N."/>
            <person name="Tester J."/>
            <person name="Thorpe A."/>
            <person name="Tracey A."/>
            <person name="Tromans A."/>
            <person name="Thomas D.W."/>
            <person name="Wall M."/>
            <person name="Wallis J.M."/>
            <person name="West A.P."/>
            <person name="Whitehead S.L."/>
            <person name="Willey D.L."/>
            <person name="Williams S.A."/>
            <person name="Wilming L."/>
            <person name="Wray P.W."/>
            <person name="Young L."/>
            <person name="Ashurst J.L."/>
            <person name="Coulson A."/>
            <person name="Blocker H."/>
            <person name="Durbin R.M."/>
            <person name="Sulston J.E."/>
            <person name="Hubbard T."/>
            <person name="Jackson M.J."/>
            <person name="Bentley D.R."/>
            <person name="Beck S."/>
            <person name="Rogers J."/>
            <person name="Dunham I."/>
        </authorList>
    </citation>
    <scope>NUCLEOTIDE SEQUENCE [LARGE SCALE GENOMIC DNA]</scope>
</reference>
<gene>
    <name type="primary">PRSS47P</name>
    <name type="synonym">PRSS47</name>
</gene>
<accession>A8MTI9</accession>
<keyword id="KW-1015">Disulfide bond</keyword>
<keyword id="KW-0325">Glycoprotein</keyword>
<keyword id="KW-0378">Hydrolase</keyword>
<keyword id="KW-0645">Protease</keyword>
<keyword id="KW-1185">Reference proteome</keyword>
<keyword id="KW-0964">Secreted</keyword>
<keyword id="KW-0720">Serine protease</keyword>
<keyword id="KW-0732">Signal</keyword>
<sequence>MGYCQGVSQVAVVLLMFPKEKEAFLALAQLLTSKNLPDTVDGQLPMGPHSRASQVAPETTSSKVDRGVSTVCGKPKVVGKIYGGRDAAAGQWPWQASLLYWGSHLCGAVLIDSCWLVSTTHCFLNKSQAPKNYQVLLGNIQLYHQTQHTQKMSVHRIITHPDFEKLHPFGSDIAMLQLHLPMNFTSYIVPVCLPSRDMQLPSNVSCWITGWGMLTEDHKRGPVHTAVPSRLQAVCCSGCRGQRVGSRVGRFRSMIVHSEGQLRSLMPGDFHLGDSGGPLVCYLPSAWVLVGLASWGLDCRHPAYPSIFTRVTYFINWIDEIMRLTPLSDPALAPHTCSPPKPLRAAGLPGPCAALVLPQTWLLLPLTLRAPWQTL</sequence>
<comment type="subcellular location">
    <subcellularLocation>
        <location evidence="4">Secreted</location>
    </subcellularLocation>
</comment>
<comment type="similarity">
    <text evidence="2">Belongs to the peptidase S1 family.</text>
</comment>
<comment type="caution">
    <text evidence="4">Could be the product of a pseudogene.</text>
</comment>